<organism>
    <name type="scientific">Marchantia polymorpha</name>
    <name type="common">Common liverwort</name>
    <name type="synonym">Marchantia aquatica</name>
    <dbReference type="NCBI Taxonomy" id="3197"/>
    <lineage>
        <taxon>Eukaryota</taxon>
        <taxon>Viridiplantae</taxon>
        <taxon>Streptophyta</taxon>
        <taxon>Embryophyta</taxon>
        <taxon>Marchantiophyta</taxon>
        <taxon>Marchantiopsida</taxon>
        <taxon>Marchantiidae</taxon>
        <taxon>Marchantiales</taxon>
        <taxon>Marchantiaceae</taxon>
        <taxon>Marchantia</taxon>
    </lineage>
</organism>
<sequence length="1386" mass="160156">MAEPVNLIFYNKVMDRTAIKQLISRLIAHFGITYTTHILDQLKTLGFQQATFGAISLGIDDLLTAPSKSWLIEDAEQYGNLSEKHHNYGSLHAVEKLRQLIETWYATSEYLKQEMNPNFRITDPLNPVHMMSFSGARGSTSQVHQLVGMRGLMSDPQGQIIDLPIQSNFREGLSLTEYIISCYGARKGVVDTAVRTSDAGYLTRRLVEVVQHIVVRKVDCGTLYGINVNNLSEKKNNFQQKLIGRVIAENIYIDHRCIAPRNQDIGALLANRLITLKTKQIFLRSPLTCKSMNWICQLCYGWSLSHGNLIEMGEAVGIIAGQSIGEPGTQLTLRTFHTGGVFTGDIAEHVRTPFNGIIEFNENFVYPTRTRHGHPAWMCHTNLFLVIKSKNKVHNLTIPPKSLLLVQNNQYVESKQVIAEIRAKTSPFKEKVQKYIYSNLEGEMHWSTKVRHASEYIHSNIHLILKTCHIWILSGNFHKKNNDLSVLFYKNQDKIDFPISLTKEKNEFSFVKNKTQLNLFLFHFYLYKKNKIFIKSQLTNNILNKINNSKNYNFILQEYNIKKKKNFYFLKNKNLTCPLFLKIKKNGVLKNNEIFAILDDPSYKVKNSGILKYGNIKVDLINQNTNFEDPQTKLFRPRYSIIKEGNFFFIPEEVYVLTQSLSSVFIKNNKFIQAGTLITSNIRSNTNGLVKIQKKGNNNYELKILPGTIYYPNETYKISKQISILIPPGKKLFNEFECKNWTYLQWIMPSKEKPFVLIRPAVEYKISKKLNKSTLFDLLKKNKKVEIKTINYLLYEDDEQIQIINEKNIQLIQTCLLVHWKKKYFFKEANVSFLKIKTKNNFKTFLQISLIEYSNLEKKKEKTISKNVLKKNYYDHFFSISKNELKNKKQGVIRIISNQNNGMQSFIILSSSDLVKTFKFKKLTKNISIKTNTNTSTAKFFEFNKNFKILNKKKKLNLTKKNFSIGLLLFKKLGFLGNLHNIVTNSFSSFYLINYTKLISNKYSIITKFQHTCQNPKWYLIDESKKINKLILGKHINYNLFNWCFPLFSLLKKKIDFQTIKLGQLLFENFVISKYKTSYPSGQIISININYFIIRLAKPYLATGGATIHNNYGEFIKEGDTLITLIYERLKSGDIIQGLPKVEQLLEARPINSVSINLENGFEDWNNDMIKFIGNLWGFFLSTKISMEQGQINLVDQIQKVYQSQGVQISNKHIEIIVRQMTSKVITLEDGMTNVFLPGELIEFSRTQKMNRALEEAVPYKPILLGITKASLNTQSFISEASFQETTRVLAKAALKGRIDWLKGLKENVILGGLVPAGTGSQEVIWQITLEKKKEIYLKKKKEFFTKKINNVFLYQDTFSIFPTTEIIHNVLKESISQNNKNNFSI</sequence>
<feature type="chain" id="PRO_0000067930" description="DNA-directed RNA polymerase subunit beta''">
    <location>
        <begin position="1"/>
        <end position="1386"/>
    </location>
</feature>
<feature type="binding site" evidence="1">
    <location>
        <position position="220"/>
    </location>
    <ligand>
        <name>Zn(2+)</name>
        <dbReference type="ChEBI" id="CHEBI:29105"/>
    </ligand>
</feature>
<feature type="binding site" evidence="1">
    <location>
        <position position="289"/>
    </location>
    <ligand>
        <name>Zn(2+)</name>
        <dbReference type="ChEBI" id="CHEBI:29105"/>
    </ligand>
</feature>
<feature type="binding site" evidence="1">
    <location>
        <position position="296"/>
    </location>
    <ligand>
        <name>Zn(2+)</name>
        <dbReference type="ChEBI" id="CHEBI:29105"/>
    </ligand>
</feature>
<feature type="binding site" evidence="1">
    <location>
        <position position="299"/>
    </location>
    <ligand>
        <name>Zn(2+)</name>
        <dbReference type="ChEBI" id="CHEBI:29105"/>
    </ligand>
</feature>
<evidence type="ECO:0000255" key="1">
    <source>
        <dbReference type="HAMAP-Rule" id="MF_01324"/>
    </source>
</evidence>
<gene>
    <name evidence="1" type="primary">rpoC2</name>
</gene>
<protein>
    <recommendedName>
        <fullName evidence="1">DNA-directed RNA polymerase subunit beta''</fullName>
        <ecNumber evidence="1">2.7.7.6</ecNumber>
    </recommendedName>
    <alternativeName>
        <fullName evidence="1">PEP</fullName>
    </alternativeName>
    <alternativeName>
        <fullName evidence="1">Plastid-encoded RNA polymerase subunit beta''</fullName>
        <shortName evidence="1">RNA polymerase subunit beta''</shortName>
    </alternativeName>
</protein>
<accession>P06274</accession>
<comment type="function">
    <text evidence="1">DNA-dependent RNA polymerase catalyzes the transcription of DNA into RNA using the four ribonucleoside triphosphates as substrates.</text>
</comment>
<comment type="catalytic activity">
    <reaction evidence="1">
        <text>RNA(n) + a ribonucleoside 5'-triphosphate = RNA(n+1) + diphosphate</text>
        <dbReference type="Rhea" id="RHEA:21248"/>
        <dbReference type="Rhea" id="RHEA-COMP:14527"/>
        <dbReference type="Rhea" id="RHEA-COMP:17342"/>
        <dbReference type="ChEBI" id="CHEBI:33019"/>
        <dbReference type="ChEBI" id="CHEBI:61557"/>
        <dbReference type="ChEBI" id="CHEBI:140395"/>
        <dbReference type="EC" id="2.7.7.6"/>
    </reaction>
</comment>
<comment type="cofactor">
    <cofactor evidence="1">
        <name>Zn(2+)</name>
        <dbReference type="ChEBI" id="CHEBI:29105"/>
    </cofactor>
    <text evidence="1">Binds 1 Zn(2+) ion per subunit.</text>
</comment>
<comment type="subunit">
    <text evidence="1">In plastids the minimal PEP RNA polymerase catalytic core is composed of four subunits: alpha, beta, beta', and beta''. When a (nuclear-encoded) sigma factor is associated with the core the holoenzyme is formed, which can initiate transcription.</text>
</comment>
<comment type="subcellular location">
    <subcellularLocation>
        <location evidence="1">Plastid</location>
        <location evidence="1">Chloroplast</location>
    </subcellularLocation>
</comment>
<comment type="similarity">
    <text evidence="1">Belongs to the RNA polymerase beta' chain family. RpoC2 subfamily.</text>
</comment>
<dbReference type="EC" id="2.7.7.6" evidence="1"/>
<dbReference type="EMBL" id="X04465">
    <property type="protein sequence ID" value="CAA28063.1"/>
    <property type="molecule type" value="Genomic_DNA"/>
</dbReference>
<dbReference type="PIR" id="A00698">
    <property type="entry name" value="RNLVC2"/>
</dbReference>
<dbReference type="RefSeq" id="NP_039277.1">
    <property type="nucleotide sequence ID" value="NC_001319.1"/>
</dbReference>
<dbReference type="SMR" id="P06274"/>
<dbReference type="GeneID" id="2702535"/>
<dbReference type="GO" id="GO:0009507">
    <property type="term" value="C:chloroplast"/>
    <property type="evidence" value="ECO:0007669"/>
    <property type="project" value="UniProtKB-SubCell"/>
</dbReference>
<dbReference type="GO" id="GO:0000428">
    <property type="term" value="C:DNA-directed RNA polymerase complex"/>
    <property type="evidence" value="ECO:0007669"/>
    <property type="project" value="UniProtKB-KW"/>
</dbReference>
<dbReference type="GO" id="GO:0005739">
    <property type="term" value="C:mitochondrion"/>
    <property type="evidence" value="ECO:0007669"/>
    <property type="project" value="GOC"/>
</dbReference>
<dbReference type="GO" id="GO:0003677">
    <property type="term" value="F:DNA binding"/>
    <property type="evidence" value="ECO:0007669"/>
    <property type="project" value="UniProtKB-UniRule"/>
</dbReference>
<dbReference type="GO" id="GO:0003899">
    <property type="term" value="F:DNA-directed RNA polymerase activity"/>
    <property type="evidence" value="ECO:0007669"/>
    <property type="project" value="UniProtKB-UniRule"/>
</dbReference>
<dbReference type="GO" id="GO:0008270">
    <property type="term" value="F:zinc ion binding"/>
    <property type="evidence" value="ECO:0007669"/>
    <property type="project" value="UniProtKB-UniRule"/>
</dbReference>
<dbReference type="GO" id="GO:0006351">
    <property type="term" value="P:DNA-templated transcription"/>
    <property type="evidence" value="ECO:0007669"/>
    <property type="project" value="UniProtKB-UniRule"/>
</dbReference>
<dbReference type="CDD" id="cd02655">
    <property type="entry name" value="RNAP_beta'_C"/>
    <property type="match status" value="1"/>
</dbReference>
<dbReference type="Gene3D" id="1.10.132.30">
    <property type="match status" value="1"/>
</dbReference>
<dbReference type="Gene3D" id="1.10.150.390">
    <property type="match status" value="1"/>
</dbReference>
<dbReference type="Gene3D" id="1.10.1790.20">
    <property type="match status" value="1"/>
</dbReference>
<dbReference type="Gene3D" id="1.10.274.100">
    <property type="entry name" value="RNA polymerase Rpb1, domain 3"/>
    <property type="match status" value="1"/>
</dbReference>
<dbReference type="HAMAP" id="MF_01324">
    <property type="entry name" value="RNApol_bact_RpoC2"/>
    <property type="match status" value="1"/>
</dbReference>
<dbReference type="InterPro" id="IPR012756">
    <property type="entry name" value="DNA-dir_RpoC2_beta_pp"/>
</dbReference>
<dbReference type="InterPro" id="IPR050254">
    <property type="entry name" value="RNA_pol_beta''_euk"/>
</dbReference>
<dbReference type="InterPro" id="IPR042102">
    <property type="entry name" value="RNA_pol_Rpb1_3_sf"/>
</dbReference>
<dbReference type="InterPro" id="IPR007083">
    <property type="entry name" value="RNA_pol_Rpb1_4"/>
</dbReference>
<dbReference type="InterPro" id="IPR007081">
    <property type="entry name" value="RNA_pol_Rpb1_5"/>
</dbReference>
<dbReference type="InterPro" id="IPR038120">
    <property type="entry name" value="Rpb1_funnel_sf"/>
</dbReference>
<dbReference type="NCBIfam" id="TIGR02388">
    <property type="entry name" value="rpoC2_cyan"/>
    <property type="match status" value="1"/>
</dbReference>
<dbReference type="PANTHER" id="PTHR34995">
    <property type="entry name" value="DNA-DIRECTED RNA POLYMERASE SUBUNIT BETA"/>
    <property type="match status" value="1"/>
</dbReference>
<dbReference type="PANTHER" id="PTHR34995:SF1">
    <property type="entry name" value="DNA-DIRECTED RNA POLYMERASE SUBUNIT BETA"/>
    <property type="match status" value="1"/>
</dbReference>
<dbReference type="Pfam" id="PF05000">
    <property type="entry name" value="RNA_pol_Rpb1_4"/>
    <property type="match status" value="1"/>
</dbReference>
<dbReference type="Pfam" id="PF04998">
    <property type="entry name" value="RNA_pol_Rpb1_5"/>
    <property type="match status" value="1"/>
</dbReference>
<dbReference type="SUPFAM" id="SSF64484">
    <property type="entry name" value="beta and beta-prime subunits of DNA dependent RNA-polymerase"/>
    <property type="match status" value="2"/>
</dbReference>
<keyword id="KW-0150">Chloroplast</keyword>
<keyword id="KW-0240">DNA-directed RNA polymerase</keyword>
<keyword id="KW-0479">Metal-binding</keyword>
<keyword id="KW-0548">Nucleotidyltransferase</keyword>
<keyword id="KW-0934">Plastid</keyword>
<keyword id="KW-0804">Transcription</keyword>
<keyword id="KW-0808">Transferase</keyword>
<keyword id="KW-0862">Zinc</keyword>
<proteinExistence type="inferred from homology"/>
<reference key="1">
    <citation type="journal article" date="1986" name="Nature">
        <title>Chloroplast gene organization deduced from complete sequence of liverwort Marchantia polymorpha chloroplast DNA.</title>
        <authorList>
            <person name="Ohyama K."/>
            <person name="Fukuzawa H."/>
            <person name="Kohchi T."/>
            <person name="Shirai H."/>
            <person name="Sano T."/>
            <person name="Sano S."/>
            <person name="Umesono K."/>
            <person name="Shiki Y."/>
            <person name="Takeuchi M."/>
            <person name="Chang Z."/>
            <person name="Aota S."/>
            <person name="Inokuchi H."/>
            <person name="Ozeki H."/>
        </authorList>
    </citation>
    <scope>NUCLEOTIDE SEQUENCE [LARGE SCALE GENOMIC DNA]</scope>
</reference>
<reference key="2">
    <citation type="journal article" date="1988" name="J. Mol. Biol.">
        <title>Structure and organization of Marchantia polymorpha chloroplast genome. II. Gene organization of the large single copy region from rps'12 to atpB.</title>
        <authorList>
            <person name="Umesono K."/>
            <person name="Inokuchi H."/>
            <person name="Shiki Y."/>
            <person name="Takeuchi M."/>
            <person name="Chang Z."/>
            <person name="Fukuzawa H."/>
            <person name="Kohchi T."/>
            <person name="Shirai H."/>
            <person name="Ohyama K."/>
            <person name="Ozeki H."/>
        </authorList>
    </citation>
    <scope>NUCLEOTIDE SEQUENCE [GENOMIC DNA]</scope>
</reference>
<geneLocation type="chloroplast"/>
<name>RPOC2_MARPO</name>